<organism>
    <name type="scientific">Bacillus cereus (strain ATCC 14579 / DSM 31 / CCUG 7414 / JCM 2152 / NBRC 15305 / NCIMB 9373 / NCTC 2599 / NRRL B-3711)</name>
    <dbReference type="NCBI Taxonomy" id="226900"/>
    <lineage>
        <taxon>Bacteria</taxon>
        <taxon>Bacillati</taxon>
        <taxon>Bacillota</taxon>
        <taxon>Bacilli</taxon>
        <taxon>Bacillales</taxon>
        <taxon>Bacillaceae</taxon>
        <taxon>Bacillus</taxon>
        <taxon>Bacillus cereus group</taxon>
    </lineage>
</organism>
<sequence>MRDNTIGSLIWLRLIRFTNQSNQLSNEFLKRFDLTTAQFDVLLQIRTYQPLTQMELAEKVTVTQGGISRMLTRLEKEGYIVRKQDWKTKTISLTEQGEAALERALPEQLAFQSSFFDDVLNEEEQKILYELMTKVHKHSEKKELPQE</sequence>
<evidence type="ECO:0000255" key="1">
    <source>
        <dbReference type="PROSITE-ProRule" id="PRU00345"/>
    </source>
</evidence>
<name>Y1936_BACCR</name>
<reference key="1">
    <citation type="journal article" date="2003" name="Nature">
        <title>Genome sequence of Bacillus cereus and comparative analysis with Bacillus anthracis.</title>
        <authorList>
            <person name="Ivanova N."/>
            <person name="Sorokin A."/>
            <person name="Anderson I."/>
            <person name="Galleron N."/>
            <person name="Candelon B."/>
            <person name="Kapatral V."/>
            <person name="Bhattacharyya A."/>
            <person name="Reznik G."/>
            <person name="Mikhailova N."/>
            <person name="Lapidus A."/>
            <person name="Chu L."/>
            <person name="Mazur M."/>
            <person name="Goltsman E."/>
            <person name="Larsen N."/>
            <person name="D'Souza M."/>
            <person name="Walunas T."/>
            <person name="Grechkin Y."/>
            <person name="Pusch G."/>
            <person name="Haselkorn R."/>
            <person name="Fonstein M."/>
            <person name="Ehrlich S.D."/>
            <person name="Overbeek R."/>
            <person name="Kyrpides N.C."/>
        </authorList>
    </citation>
    <scope>NUCLEOTIDE SEQUENCE [LARGE SCALE GENOMIC DNA]</scope>
    <source>
        <strain>ATCC 14579 / DSM 31 / CCUG 7414 / JCM 2152 / NBRC 15305 / NCIMB 9373 / NCTC 2599 / NRRL B-3711</strain>
    </source>
</reference>
<gene>
    <name type="ordered locus">BC_1936</name>
</gene>
<protein>
    <recommendedName>
        <fullName>Uncharacterized HTH-type transcriptional regulator BC_1936</fullName>
    </recommendedName>
</protein>
<feature type="chain" id="PRO_0000293592" description="Uncharacterized HTH-type transcriptional regulator BC_1936">
    <location>
        <begin position="1"/>
        <end position="147"/>
    </location>
</feature>
<feature type="domain" description="HTH marR-type" evidence="1">
    <location>
        <begin position="1"/>
        <end position="137"/>
    </location>
</feature>
<feature type="DNA-binding region" description="H-T-H motif" evidence="1">
    <location>
        <begin position="53"/>
        <end position="76"/>
    </location>
</feature>
<proteinExistence type="predicted"/>
<keyword id="KW-0238">DNA-binding</keyword>
<keyword id="KW-1185">Reference proteome</keyword>
<keyword id="KW-0804">Transcription</keyword>
<keyword id="KW-0805">Transcription regulation</keyword>
<dbReference type="EMBL" id="AE016877">
    <property type="protein sequence ID" value="AAP08907.1"/>
    <property type="molecule type" value="Genomic_DNA"/>
</dbReference>
<dbReference type="RefSeq" id="NP_831706.1">
    <property type="nucleotide sequence ID" value="NC_004722.1"/>
</dbReference>
<dbReference type="RefSeq" id="WP_001205510.1">
    <property type="nucleotide sequence ID" value="NZ_CP138336.1"/>
</dbReference>
<dbReference type="SMR" id="Q81EN2"/>
<dbReference type="STRING" id="226900.BC_1936"/>
<dbReference type="KEGG" id="bce:BC1936"/>
<dbReference type="PATRIC" id="fig|226900.8.peg.1940"/>
<dbReference type="HOGENOM" id="CLU_083287_27_2_9"/>
<dbReference type="OrthoDB" id="158803at2"/>
<dbReference type="Proteomes" id="UP000001417">
    <property type="component" value="Chromosome"/>
</dbReference>
<dbReference type="GO" id="GO:0003677">
    <property type="term" value="F:DNA binding"/>
    <property type="evidence" value="ECO:0007669"/>
    <property type="project" value="UniProtKB-KW"/>
</dbReference>
<dbReference type="GO" id="GO:0003700">
    <property type="term" value="F:DNA-binding transcription factor activity"/>
    <property type="evidence" value="ECO:0007669"/>
    <property type="project" value="InterPro"/>
</dbReference>
<dbReference type="GO" id="GO:0006355">
    <property type="term" value="P:regulation of DNA-templated transcription"/>
    <property type="evidence" value="ECO:0000318"/>
    <property type="project" value="GO_Central"/>
</dbReference>
<dbReference type="GO" id="GO:0006950">
    <property type="term" value="P:response to stress"/>
    <property type="evidence" value="ECO:0000318"/>
    <property type="project" value="GO_Central"/>
</dbReference>
<dbReference type="CDD" id="cd00090">
    <property type="entry name" value="HTH_ARSR"/>
    <property type="match status" value="1"/>
</dbReference>
<dbReference type="Gene3D" id="1.10.10.10">
    <property type="entry name" value="Winged helix-like DNA-binding domain superfamily/Winged helix DNA-binding domain"/>
    <property type="match status" value="1"/>
</dbReference>
<dbReference type="InterPro" id="IPR011991">
    <property type="entry name" value="ArsR-like_HTH"/>
</dbReference>
<dbReference type="InterPro" id="IPR000835">
    <property type="entry name" value="HTH_MarR-typ"/>
</dbReference>
<dbReference type="InterPro" id="IPR036388">
    <property type="entry name" value="WH-like_DNA-bd_sf"/>
</dbReference>
<dbReference type="InterPro" id="IPR036390">
    <property type="entry name" value="WH_DNA-bd_sf"/>
</dbReference>
<dbReference type="PANTHER" id="PTHR42756">
    <property type="entry name" value="TRANSCRIPTIONAL REGULATOR, MARR"/>
    <property type="match status" value="1"/>
</dbReference>
<dbReference type="PANTHER" id="PTHR42756:SF1">
    <property type="entry name" value="TRANSCRIPTIONAL REPRESSOR OF EMRAB OPERON"/>
    <property type="match status" value="1"/>
</dbReference>
<dbReference type="Pfam" id="PF01047">
    <property type="entry name" value="MarR"/>
    <property type="match status" value="1"/>
</dbReference>
<dbReference type="PRINTS" id="PR00598">
    <property type="entry name" value="HTHMARR"/>
</dbReference>
<dbReference type="SMART" id="SM00347">
    <property type="entry name" value="HTH_MARR"/>
    <property type="match status" value="1"/>
</dbReference>
<dbReference type="SUPFAM" id="SSF46785">
    <property type="entry name" value="Winged helix' DNA-binding domain"/>
    <property type="match status" value="1"/>
</dbReference>
<dbReference type="PROSITE" id="PS50995">
    <property type="entry name" value="HTH_MARR_2"/>
    <property type="match status" value="1"/>
</dbReference>
<accession>Q81EN2</accession>